<accession>A9W370</accession>
<name>RL35_METEP</name>
<protein>
    <recommendedName>
        <fullName evidence="1">Large ribosomal subunit protein bL35</fullName>
    </recommendedName>
    <alternativeName>
        <fullName evidence="2">50S ribosomal protein L35</fullName>
    </alternativeName>
</protein>
<sequence length="67" mass="7611">MPKLKTKSGAKKRFKITGTGKVMYAQAGKRHGMIKRTNKQIRNLRGTTTLFEGDAANVKKYFLPNQR</sequence>
<organism>
    <name type="scientific">Methylorubrum extorquens (strain PA1)</name>
    <name type="common">Methylobacterium extorquens</name>
    <dbReference type="NCBI Taxonomy" id="419610"/>
    <lineage>
        <taxon>Bacteria</taxon>
        <taxon>Pseudomonadati</taxon>
        <taxon>Pseudomonadota</taxon>
        <taxon>Alphaproteobacteria</taxon>
        <taxon>Hyphomicrobiales</taxon>
        <taxon>Methylobacteriaceae</taxon>
        <taxon>Methylorubrum</taxon>
    </lineage>
</organism>
<keyword id="KW-0687">Ribonucleoprotein</keyword>
<keyword id="KW-0689">Ribosomal protein</keyword>
<comment type="similarity">
    <text evidence="1">Belongs to the bacterial ribosomal protein bL35 family.</text>
</comment>
<proteinExistence type="inferred from homology"/>
<feature type="chain" id="PRO_1000127374" description="Large ribosomal subunit protein bL35">
    <location>
        <begin position="1"/>
        <end position="67"/>
    </location>
</feature>
<gene>
    <name evidence="1" type="primary">rpmI</name>
    <name type="ordered locus">Mext_1627</name>
</gene>
<dbReference type="EMBL" id="CP000908">
    <property type="protein sequence ID" value="ABY30026.1"/>
    <property type="molecule type" value="Genomic_DNA"/>
</dbReference>
<dbReference type="RefSeq" id="WP_003602670.1">
    <property type="nucleotide sequence ID" value="NC_010172.1"/>
</dbReference>
<dbReference type="SMR" id="A9W370"/>
<dbReference type="GeneID" id="72989284"/>
<dbReference type="KEGG" id="mex:Mext_1627"/>
<dbReference type="eggNOG" id="COG0291">
    <property type="taxonomic scope" value="Bacteria"/>
</dbReference>
<dbReference type="HOGENOM" id="CLU_169643_2_1_5"/>
<dbReference type="BioCyc" id="MEXT419610:MEXT_RS08260-MONOMER"/>
<dbReference type="GO" id="GO:0022625">
    <property type="term" value="C:cytosolic large ribosomal subunit"/>
    <property type="evidence" value="ECO:0007669"/>
    <property type="project" value="TreeGrafter"/>
</dbReference>
<dbReference type="GO" id="GO:0003735">
    <property type="term" value="F:structural constituent of ribosome"/>
    <property type="evidence" value="ECO:0007669"/>
    <property type="project" value="InterPro"/>
</dbReference>
<dbReference type="GO" id="GO:0006412">
    <property type="term" value="P:translation"/>
    <property type="evidence" value="ECO:0007669"/>
    <property type="project" value="UniProtKB-UniRule"/>
</dbReference>
<dbReference type="FunFam" id="4.10.410.60:FF:000001">
    <property type="entry name" value="50S ribosomal protein L35"/>
    <property type="match status" value="1"/>
</dbReference>
<dbReference type="Gene3D" id="4.10.410.60">
    <property type="match status" value="1"/>
</dbReference>
<dbReference type="HAMAP" id="MF_00514">
    <property type="entry name" value="Ribosomal_bL35"/>
    <property type="match status" value="1"/>
</dbReference>
<dbReference type="InterPro" id="IPR001706">
    <property type="entry name" value="Ribosomal_bL35"/>
</dbReference>
<dbReference type="InterPro" id="IPR021137">
    <property type="entry name" value="Ribosomal_bL35-like"/>
</dbReference>
<dbReference type="InterPro" id="IPR018265">
    <property type="entry name" value="Ribosomal_bL35_CS"/>
</dbReference>
<dbReference type="InterPro" id="IPR037229">
    <property type="entry name" value="Ribosomal_bL35_sf"/>
</dbReference>
<dbReference type="NCBIfam" id="TIGR00001">
    <property type="entry name" value="rpmI_bact"/>
    <property type="match status" value="1"/>
</dbReference>
<dbReference type="PANTHER" id="PTHR33343">
    <property type="entry name" value="54S RIBOSOMAL PROTEIN BL35M"/>
    <property type="match status" value="1"/>
</dbReference>
<dbReference type="PANTHER" id="PTHR33343:SF1">
    <property type="entry name" value="LARGE RIBOSOMAL SUBUNIT PROTEIN BL35M"/>
    <property type="match status" value="1"/>
</dbReference>
<dbReference type="Pfam" id="PF01632">
    <property type="entry name" value="Ribosomal_L35p"/>
    <property type="match status" value="1"/>
</dbReference>
<dbReference type="PRINTS" id="PR00064">
    <property type="entry name" value="RIBOSOMALL35"/>
</dbReference>
<dbReference type="SUPFAM" id="SSF143034">
    <property type="entry name" value="L35p-like"/>
    <property type="match status" value="1"/>
</dbReference>
<dbReference type="PROSITE" id="PS00936">
    <property type="entry name" value="RIBOSOMAL_L35"/>
    <property type="match status" value="1"/>
</dbReference>
<reference key="1">
    <citation type="submission" date="2007-12" db="EMBL/GenBank/DDBJ databases">
        <title>Complete sequence of Methylobacterium extorquens PA1.</title>
        <authorList>
            <consortium name="US DOE Joint Genome Institute"/>
            <person name="Copeland A."/>
            <person name="Lucas S."/>
            <person name="Lapidus A."/>
            <person name="Barry K."/>
            <person name="Glavina del Rio T."/>
            <person name="Dalin E."/>
            <person name="Tice H."/>
            <person name="Pitluck S."/>
            <person name="Saunders E."/>
            <person name="Brettin T."/>
            <person name="Bruce D."/>
            <person name="Detter J.C."/>
            <person name="Han C."/>
            <person name="Schmutz J."/>
            <person name="Larimer F."/>
            <person name="Land M."/>
            <person name="Hauser L."/>
            <person name="Kyrpides N."/>
            <person name="Kim E."/>
            <person name="Marx C."/>
            <person name="Richardson P."/>
        </authorList>
    </citation>
    <scope>NUCLEOTIDE SEQUENCE [LARGE SCALE GENOMIC DNA]</scope>
    <source>
        <strain>PA1</strain>
    </source>
</reference>
<evidence type="ECO:0000255" key="1">
    <source>
        <dbReference type="HAMAP-Rule" id="MF_00514"/>
    </source>
</evidence>
<evidence type="ECO:0000305" key="2"/>